<proteinExistence type="inferred from homology"/>
<gene>
    <name evidence="1" type="primary">rplV</name>
    <name type="ordered locus">HSM_1957</name>
</gene>
<keyword id="KW-0687">Ribonucleoprotein</keyword>
<keyword id="KW-0689">Ribosomal protein</keyword>
<keyword id="KW-0694">RNA-binding</keyword>
<keyword id="KW-0699">rRNA-binding</keyword>
<dbReference type="EMBL" id="CP000947">
    <property type="protein sequence ID" value="ACA31751.1"/>
    <property type="molecule type" value="Genomic_DNA"/>
</dbReference>
<dbReference type="RefSeq" id="WP_012341029.1">
    <property type="nucleotide sequence ID" value="NC_010519.1"/>
</dbReference>
<dbReference type="SMR" id="B0UX18"/>
<dbReference type="STRING" id="228400.HSM_1957"/>
<dbReference type="GeneID" id="31488268"/>
<dbReference type="KEGG" id="hsm:HSM_1957"/>
<dbReference type="HOGENOM" id="CLU_083987_3_3_6"/>
<dbReference type="GO" id="GO:0022625">
    <property type="term" value="C:cytosolic large ribosomal subunit"/>
    <property type="evidence" value="ECO:0007669"/>
    <property type="project" value="TreeGrafter"/>
</dbReference>
<dbReference type="GO" id="GO:0019843">
    <property type="term" value="F:rRNA binding"/>
    <property type="evidence" value="ECO:0007669"/>
    <property type="project" value="UniProtKB-UniRule"/>
</dbReference>
<dbReference type="GO" id="GO:0003735">
    <property type="term" value="F:structural constituent of ribosome"/>
    <property type="evidence" value="ECO:0007669"/>
    <property type="project" value="InterPro"/>
</dbReference>
<dbReference type="GO" id="GO:0006412">
    <property type="term" value="P:translation"/>
    <property type="evidence" value="ECO:0007669"/>
    <property type="project" value="UniProtKB-UniRule"/>
</dbReference>
<dbReference type="CDD" id="cd00336">
    <property type="entry name" value="Ribosomal_L22"/>
    <property type="match status" value="1"/>
</dbReference>
<dbReference type="FunFam" id="3.90.470.10:FF:000001">
    <property type="entry name" value="50S ribosomal protein L22"/>
    <property type="match status" value="1"/>
</dbReference>
<dbReference type="Gene3D" id="3.90.470.10">
    <property type="entry name" value="Ribosomal protein L22/L17"/>
    <property type="match status" value="1"/>
</dbReference>
<dbReference type="HAMAP" id="MF_01331_B">
    <property type="entry name" value="Ribosomal_uL22_B"/>
    <property type="match status" value="1"/>
</dbReference>
<dbReference type="InterPro" id="IPR001063">
    <property type="entry name" value="Ribosomal_uL22"/>
</dbReference>
<dbReference type="InterPro" id="IPR005727">
    <property type="entry name" value="Ribosomal_uL22_bac/chlpt-type"/>
</dbReference>
<dbReference type="InterPro" id="IPR047867">
    <property type="entry name" value="Ribosomal_uL22_bac/org-type"/>
</dbReference>
<dbReference type="InterPro" id="IPR018260">
    <property type="entry name" value="Ribosomal_uL22_CS"/>
</dbReference>
<dbReference type="InterPro" id="IPR036394">
    <property type="entry name" value="Ribosomal_uL22_sf"/>
</dbReference>
<dbReference type="NCBIfam" id="TIGR01044">
    <property type="entry name" value="rplV_bact"/>
    <property type="match status" value="1"/>
</dbReference>
<dbReference type="PANTHER" id="PTHR13501">
    <property type="entry name" value="CHLOROPLAST 50S RIBOSOMAL PROTEIN L22-RELATED"/>
    <property type="match status" value="1"/>
</dbReference>
<dbReference type="PANTHER" id="PTHR13501:SF8">
    <property type="entry name" value="LARGE RIBOSOMAL SUBUNIT PROTEIN UL22M"/>
    <property type="match status" value="1"/>
</dbReference>
<dbReference type="Pfam" id="PF00237">
    <property type="entry name" value="Ribosomal_L22"/>
    <property type="match status" value="1"/>
</dbReference>
<dbReference type="SUPFAM" id="SSF54843">
    <property type="entry name" value="Ribosomal protein L22"/>
    <property type="match status" value="1"/>
</dbReference>
<dbReference type="PROSITE" id="PS00464">
    <property type="entry name" value="RIBOSOMAL_L22"/>
    <property type="match status" value="1"/>
</dbReference>
<evidence type="ECO:0000255" key="1">
    <source>
        <dbReference type="HAMAP-Rule" id="MF_01331"/>
    </source>
</evidence>
<evidence type="ECO:0000305" key="2"/>
<organism>
    <name type="scientific">Histophilus somni (strain 2336)</name>
    <name type="common">Haemophilus somnus</name>
    <dbReference type="NCBI Taxonomy" id="228400"/>
    <lineage>
        <taxon>Bacteria</taxon>
        <taxon>Pseudomonadati</taxon>
        <taxon>Pseudomonadota</taxon>
        <taxon>Gammaproteobacteria</taxon>
        <taxon>Pasteurellales</taxon>
        <taxon>Pasteurellaceae</taxon>
        <taxon>Histophilus</taxon>
    </lineage>
</organism>
<reference key="1">
    <citation type="submission" date="2008-02" db="EMBL/GenBank/DDBJ databases">
        <title>Complete sequence of Haemophilus somnus 2336.</title>
        <authorList>
            <consortium name="US DOE Joint Genome Institute"/>
            <person name="Siddaramappa S."/>
            <person name="Duncan A.J."/>
            <person name="Challacombe J.F."/>
            <person name="Rainey D."/>
            <person name="Gillaspy A.F."/>
            <person name="Carson M."/>
            <person name="Gipson J."/>
            <person name="Gipson M."/>
            <person name="Bruce D."/>
            <person name="Detter J.C."/>
            <person name="Han C.S."/>
            <person name="Land M."/>
            <person name="Tapia R."/>
            <person name="Thompson L.S."/>
            <person name="Orvis J."/>
            <person name="Zaitshik J."/>
            <person name="Barnes G."/>
            <person name="Brettin T.S."/>
            <person name="Dyer D.W."/>
            <person name="Inzana T.J."/>
        </authorList>
    </citation>
    <scope>NUCLEOTIDE SEQUENCE [LARGE SCALE GENOMIC DNA]</scope>
    <source>
        <strain>2336</strain>
    </source>
</reference>
<comment type="function">
    <text evidence="1">This protein binds specifically to 23S rRNA; its binding is stimulated by other ribosomal proteins, e.g. L4, L17, and L20. It is important during the early stages of 50S assembly. It makes multiple contacts with different domains of the 23S rRNA in the assembled 50S subunit and ribosome (By similarity).</text>
</comment>
<comment type="function">
    <text evidence="1">The globular domain of the protein is located near the polypeptide exit tunnel on the outside of the subunit, while an extended beta-hairpin is found that lines the wall of the exit tunnel in the center of the 70S ribosome.</text>
</comment>
<comment type="subunit">
    <text evidence="1">Part of the 50S ribosomal subunit.</text>
</comment>
<comment type="similarity">
    <text evidence="1">Belongs to the universal ribosomal protein uL22 family.</text>
</comment>
<name>RL22_HISS2</name>
<accession>B0UX18</accession>
<sequence>METIAKHRYARTSVQKARLVADLVRGKKVAQALEILTFTNKKAAALVKKVLESAIANAEHNDGADIDDLKVAKIFVDEGPSMKRVMPRAKGRADRILKRTSHITVVVSDR</sequence>
<feature type="chain" id="PRO_1000086558" description="Large ribosomal subunit protein uL22">
    <location>
        <begin position="1"/>
        <end position="110"/>
    </location>
</feature>
<protein>
    <recommendedName>
        <fullName evidence="1">Large ribosomal subunit protein uL22</fullName>
    </recommendedName>
    <alternativeName>
        <fullName evidence="2">50S ribosomal protein L22</fullName>
    </alternativeName>
</protein>